<gene>
    <name evidence="9" type="primary">K04</name>
    <name evidence="8" type="synonym">M10</name>
</gene>
<organism evidence="9">
    <name type="scientific">Phlebotomus duboscqi</name>
    <name type="common">Sandfly</name>
    <dbReference type="NCBI Taxonomy" id="37738"/>
    <lineage>
        <taxon>Eukaryota</taxon>
        <taxon>Metazoa</taxon>
        <taxon>Ecdysozoa</taxon>
        <taxon>Arthropoda</taxon>
        <taxon>Hexapoda</taxon>
        <taxon>Insecta</taxon>
        <taxon>Pterygota</taxon>
        <taxon>Neoptera</taxon>
        <taxon>Endopterygota</taxon>
        <taxon>Diptera</taxon>
        <taxon>Nematocera</taxon>
        <taxon>Psychodoidea</taxon>
        <taxon>Psychodidae</taxon>
        <taxon>Phlebotomus</taxon>
        <taxon>Phlebotomus</taxon>
    </lineage>
</organism>
<name>YP10_PHLDU</name>
<comment type="function">
    <text evidence="3 6">Probably modulates blood feeding of sand flies on vertebrate species by binding and sequestering different mediators involved in the host response (Probable). Functions as a chemoattractant for host neutrophils; likely acts through a G-protein-coupled receptor and effect is dependent on calcium influx and phosphatidylinositol 3-kinases (PI3K) activity (PubMed:34050141).</text>
</comment>
<comment type="function">
    <text evidence="7">(Microbial infection) Probably enhances infection caused by Leishmania species in the host through augmentation of host neutrophil recruitment into the skin.</text>
</comment>
<comment type="subcellular location">
    <subcellularLocation>
        <location evidence="6">Secreted</location>
    </subcellularLocation>
</comment>
<comment type="tissue specificity">
    <text evidence="2 3">Salivary gland (at protein level).</text>
</comment>
<comment type="miscellaneous">
    <text evidence="3">Exacerbates Leishmania infection in mice when co-injected with parasites and yellow-related salivary protein M35.</text>
</comment>
<comment type="similarity">
    <text evidence="6">Belongs to the major royal jelly protein family.</text>
</comment>
<protein>
    <recommendedName>
        <fullName evidence="6">Yellow-related salivary protein M10</fullName>
    </recommendedName>
    <alternativeName>
        <fullName evidence="4 5">PduM10</fullName>
    </alternativeName>
</protein>
<evidence type="ECO:0000255" key="1">
    <source>
        <dbReference type="PROSITE-ProRule" id="PRU00498"/>
    </source>
</evidence>
<evidence type="ECO:0000269" key="2">
    <source>
    </source>
</evidence>
<evidence type="ECO:0000269" key="3">
    <source>
    </source>
</evidence>
<evidence type="ECO:0000303" key="4">
    <source>
    </source>
</evidence>
<evidence type="ECO:0000303" key="5">
    <source>
    </source>
</evidence>
<evidence type="ECO:0000305" key="6"/>
<evidence type="ECO:0000305" key="7">
    <source>
    </source>
</evidence>
<evidence type="ECO:0000312" key="8">
    <source>
        <dbReference type="EMBL" id="ABI15938.1"/>
    </source>
</evidence>
<evidence type="ECO:0000312" key="9">
    <source>
        <dbReference type="EMBL" id="ABI20170.1"/>
    </source>
</evidence>
<dbReference type="EMBL" id="DQ826519">
    <property type="protein sequence ID" value="ABI15938.1"/>
    <property type="molecule type" value="mRNA"/>
</dbReference>
<dbReference type="EMBL" id="DQ835365">
    <property type="protein sequence ID" value="ABI20170.1"/>
    <property type="molecule type" value="mRNA"/>
</dbReference>
<dbReference type="GO" id="GO:0005576">
    <property type="term" value="C:extracellular region"/>
    <property type="evidence" value="ECO:0007669"/>
    <property type="project" value="UniProtKB-SubCell"/>
</dbReference>
<dbReference type="Gene3D" id="2.120.10.30">
    <property type="entry name" value="TolB, C-terminal domain"/>
    <property type="match status" value="1"/>
</dbReference>
<dbReference type="InterPro" id="IPR011042">
    <property type="entry name" value="6-blade_b-propeller_TolB-like"/>
</dbReference>
<dbReference type="InterPro" id="IPR017996">
    <property type="entry name" value="Royal_jelly/protein_yellow"/>
</dbReference>
<dbReference type="PANTHER" id="PTHR10009:SF18">
    <property type="entry name" value="PROTEIN YELLOW-LIKE PROTEIN"/>
    <property type="match status" value="1"/>
</dbReference>
<dbReference type="PANTHER" id="PTHR10009">
    <property type="entry name" value="PROTEIN YELLOW-RELATED"/>
    <property type="match status" value="1"/>
</dbReference>
<dbReference type="Pfam" id="PF03022">
    <property type="entry name" value="MRJP"/>
    <property type="match status" value="1"/>
</dbReference>
<dbReference type="SUPFAM" id="SSF75011">
    <property type="entry name" value="3-carboxy-cis,cis-mucoante lactonizing enzyme"/>
    <property type="match status" value="1"/>
</dbReference>
<proteinExistence type="evidence at protein level"/>
<reference evidence="9" key="1">
    <citation type="journal article" date="2006" name="BMC Genomics">
        <title>High degree of conservancy among secreted salivary gland proteins from two geographically distant Phlebotomus duboscqi sandflies populations (Mali and Kenya).</title>
        <authorList>
            <person name="Kato H."/>
            <person name="Anderson J.M."/>
            <person name="Kamhawi S."/>
            <person name="Oliveira F."/>
            <person name="Lawyer P.G."/>
            <person name="Pham V.M."/>
            <person name="Sangare C.S."/>
            <person name="Samake S."/>
            <person name="Sissoko I."/>
            <person name="Garfield M."/>
            <person name="Sigutova L."/>
            <person name="Volf P."/>
            <person name="Doumbia S."/>
            <person name="Valenzuela J.G."/>
        </authorList>
    </citation>
    <scope>NUCLEOTIDE SEQUENCE [LARGE SCALE MRNA]</scope>
    <scope>PROTEIN SEQUENCE OF 19-33</scope>
    <scope>TISSUE SPECIFICITY</scope>
    <source>
        <strain evidence="8">Mali</strain>
    </source>
</reference>
<reference evidence="6" key="2">
    <citation type="journal article" date="2021" name="Nat. Commun.">
        <title>A sand fly salivary protein acts as a neutrophil chemoattractant.</title>
        <authorList>
            <person name="Guimaraes-Costa A.B."/>
            <person name="Shannon J.P."/>
            <person name="Waclawiak I."/>
            <person name="Oliveira J."/>
            <person name="Meneses C."/>
            <person name="de Castro W."/>
            <person name="Wen X."/>
            <person name="Brzostowski J."/>
            <person name="Serafim T.D."/>
            <person name="Andersen J.F."/>
            <person name="Hickman H.D."/>
            <person name="Kamhawi S."/>
            <person name="Valenzuela J.G."/>
            <person name="Oliveira F."/>
        </authorList>
    </citation>
    <scope>FUNCTION</scope>
    <scope>FUNCTION (MICROBIAL INFECTION)</scope>
    <scope>TISSUE SPECIFICITY</scope>
</reference>
<accession>Q06K53</accession>
<keyword id="KW-0903">Direct protein sequencing</keyword>
<keyword id="KW-0325">Glycoprotein</keyword>
<keyword id="KW-0964">Secreted</keyword>
<keyword id="KW-0732">Signal</keyword>
<sequence length="399" mass="45401">MKFILSVLALASFQHVFCDDVERAYAWRNISFVDTREGTYNPEDVIPTGVTHDAKTKKLYFGVPRLYPNIPYTLAEIDTNKYNSSEIRSPPFSKFNSQGGKEFTSIYQPVIDDCRRLWVLDVGEADYKKNGNEYPTKNPEIIAFDLNQEGNPEVHRYKLEGDVAKTPLGFGGFAVDVLNPNGNCATSDETYLYITNFIDNALIVYDMKNRNAWKINDDSFKPEPGKSVFNHKGEEYTYSVGIFGITLGDRDKDGHRLAYYLAGSSTKVYNVNTANLKKKVKSLKPTLLGERGYKTEAIALAYDPKTKVIFFAESDSRQVSCWNIQKDLKPENVGVIYTNAYFVFGTDIMVDADSTLWFMSNAHPPTKIPKLEFDKRQIRLMKVPTHRAIRNLPCEMRKA</sequence>
<feature type="signal peptide" evidence="2">
    <location>
        <begin position="1"/>
        <end position="18"/>
    </location>
</feature>
<feature type="chain" id="PRO_0000461690" description="Yellow-related salivary protein M10" evidence="6">
    <location>
        <begin position="19"/>
        <end position="399"/>
    </location>
</feature>
<feature type="glycosylation site" description="N-linked (GlcNAc...) asparagine" evidence="1">
    <location>
        <position position="29"/>
    </location>
</feature>
<feature type="glycosylation site" description="N-linked (GlcNAc...) asparagine" evidence="1">
    <location>
        <position position="83"/>
    </location>
</feature>